<comment type="function">
    <text evidence="7 9 10 16">Sequence-specific RNA-binding protein that regulates mRNA cytoplasmic polyadenylation and translation initiation during oocyte maturation and early development. Binds to the cytoplasmic polyadenylation element (CPE), an uridine-rich sequence element (consensus sequence 5'-UUUUUAU-3') within the mRNA 3'-UTR. In the absence of phosphorylation and in association with tacc3/maskin, also acts as a repressor of translation of CPE-containing mRNA; a repression that is relieved by phosphorylation or degradation. Requires zinc for RNA binding. Involved in the cell cycle progression from S phase into M phase.</text>
</comment>
<comment type="subunit">
    <text evidence="4 6 7 11 12 13 14 15">Found in a complex with cpeb1, tacc3/maskin and eif4e; dissolution of this complex results in the binding of eif4e to eif4g and the translational activation of CPE-containing mRNAs. Found in a complex with cpeb1, cpsf1, the cytoplasmic poly(A) polymerase papd4/gld2 and sympk. Found in a mRNP complex with cpeb1, a guanine exchange factor xgef and mos mRNA. Interacts with cpsf1, papd4/gld2, tacc3/maskin, microtubules, sympk and xgef. Component of a ribonucleoprotein (RNP) complex, at least composed of cpeb1, lsm14b/rap55b, ddx6/Xp54, ybx2/frgy2, pat1/P100, eif4enif1/4E-T and eif4e1b. Interaction with ybx2/frgy2 is RNA-dependent. May interact with aplp1. Interaction with cpsf1 increases during meiotic maturation and is not mediated through RNA. Interaction with xgef is necessary for its early activating phosphorylation status.</text>
</comment>
<comment type="interaction">
    <interactant intactId="EBI-65730">
        <id>Q91572</id>
    </interactant>
    <interactant intactId="EBI-7161238">
        <id>Q91854</id>
        <label>fbxw1</label>
    </interactant>
    <organismsDiffer>false</organismsDiffer>
    <experiments>2</experiments>
</comment>
<comment type="interaction">
    <interactant intactId="EBI-65730">
        <id>Q91572</id>
    </interactant>
    <interactant intactId="EBI-65726">
        <id>Q9PTG8</id>
        <label>tacc3</label>
    </interactant>
    <organismsDiffer>false</organismsDiffer>
    <experiments>3</experiments>
</comment>
<comment type="subcellular location">
    <subcellularLocation>
        <location>Cytoplasm</location>
    </subcellularLocation>
    <subcellularLocation>
        <location>Cytoplasm</location>
        <location>Cytoskeleton</location>
        <location>Microtubule organizing center</location>
        <location>Centrosome</location>
    </subcellularLocation>
    <subcellularLocation>
        <location>Cytoplasm</location>
        <location>Cytoskeleton</location>
        <location>Spindle pole</location>
    </subcellularLocation>
    <subcellularLocation>
        <location>Membrane</location>
    </subcellularLocation>
    <text>During mitosis localizes with tacc3/maskin and CPE-containing mRNAs to both spindle poles. Membrane-associated. Colocalizes with members of the polyadenylation and translation complex factors (cpsf, aplp1, tacc3/maskin, aurka, etc.), including CPE-containing RNAs.</text>
</comment>
<comment type="tissue specificity">
    <text evidence="5 8 16">Expressed uniformly in growing oocytes (stage I to IV) and distributed at the animal pole in fully-grown oocytes (stages V and VI) (at protein level). During early oocyte maturation its expression remains constant and then declines drastically during late oocyte maturation between 4 hours and 6 hours after the germinal vesicle breakdown (GVBD) (at protein level). Expressed during early oogenesis until stage III, remains constant through stage V oocytes, decreases slightly in stage VI oocytes, and then remains constant throughout oocyte maturation.</text>
</comment>
<comment type="developmental stage">
    <text evidence="6">After fertilization, expressed at the animal pole in embryo, blastomeres and blastula stage (at protein level).</text>
</comment>
<comment type="domain">
    <text>The 2 RRM domains and the C-terminal region mediate interaction with CPE-containing RNA.</text>
</comment>
<comment type="PTM">
    <text evidence="5 9 10 13 14">Ser-174 phosphorylation by aurka in immature oocytes is essential to trigger CPE-containing mRNA cytoplasmic polyadenylation and translation activation and the subsequent signaling events that result in meiotic progression. Ser-174 phosphorylation recruits the cleavage and polyadenylation specificity factor (cpsf1) into an active cytoplasmic polyadenylation complex. Ser-174 phosphorylation increases its affinity for cpsf1 and papd4/gld2. Heavily phosphorylated by CDK1 on serines late during oocyte maturation. Ser-210 phosphorylation is sufficient to target cpeb1 for degradation. Ser-174 phosphorylation oscillates with the cell cycle (phosphorylated at M phase, but not at S phase) and is necessary for S phase to M phase progression. Phosphorylation at Ser-174 may be promoted by aplp1.</text>
</comment>
<comment type="PTM">
    <text evidence="9">Ubiquitinated. Requires a PEST box and the proteasome pathway for destruction during oocyte maturation. Ser-210 phosphorylation triggers its destruction, an event important to allow the transition from metaphase I to metaphase II and cytokinesis in the early embryo.</text>
</comment>
<comment type="similarity">
    <text evidence="18">Belongs to the RRM CPEB family.</text>
</comment>
<dbReference type="EMBL" id="U14169">
    <property type="protein sequence ID" value="AAA80483.1"/>
    <property type="molecule type" value="mRNA"/>
</dbReference>
<dbReference type="EMBL" id="BC170313">
    <property type="protein sequence ID" value="AAI70313.1"/>
    <property type="molecule type" value="mRNA"/>
</dbReference>
<dbReference type="EMBL" id="BC170341">
    <property type="protein sequence ID" value="AAI70341.1"/>
    <property type="molecule type" value="mRNA"/>
</dbReference>
<dbReference type="PIR" id="A55377">
    <property type="entry name" value="A55377"/>
</dbReference>
<dbReference type="RefSeq" id="NP_001084072.1">
    <property type="nucleotide sequence ID" value="NM_001090603.1"/>
</dbReference>
<dbReference type="SMR" id="Q91572"/>
<dbReference type="BioGRID" id="100614">
    <property type="interactions" value="6"/>
</dbReference>
<dbReference type="DIP" id="DIP-30935N"/>
<dbReference type="IntAct" id="Q91572">
    <property type="interactions" value="7"/>
</dbReference>
<dbReference type="MINT" id="Q91572"/>
<dbReference type="iPTMnet" id="Q91572"/>
<dbReference type="GeneID" id="399289"/>
<dbReference type="KEGG" id="xla:399289"/>
<dbReference type="AGR" id="Xenbase:XB-GENE-946172"/>
<dbReference type="CTD" id="399289"/>
<dbReference type="Xenbase" id="XB-GENE-946172">
    <property type="gene designation" value="cpeb1.L"/>
</dbReference>
<dbReference type="OrthoDB" id="10033548at2759"/>
<dbReference type="Proteomes" id="UP000186698">
    <property type="component" value="Chromosome 3L"/>
</dbReference>
<dbReference type="Bgee" id="399289">
    <property type="expression patterns" value="Expressed in egg cell and 17 other cell types or tissues"/>
</dbReference>
<dbReference type="GO" id="GO:0005813">
    <property type="term" value="C:centrosome"/>
    <property type="evidence" value="ECO:0007669"/>
    <property type="project" value="UniProtKB-SubCell"/>
</dbReference>
<dbReference type="GO" id="GO:0005737">
    <property type="term" value="C:cytoplasm"/>
    <property type="evidence" value="ECO:0000250"/>
    <property type="project" value="UniProtKB"/>
</dbReference>
<dbReference type="GO" id="GO:0016020">
    <property type="term" value="C:membrane"/>
    <property type="evidence" value="ECO:0007669"/>
    <property type="project" value="UniProtKB-SubCell"/>
</dbReference>
<dbReference type="GO" id="GO:0043005">
    <property type="term" value="C:neuron projection"/>
    <property type="evidence" value="ECO:0000318"/>
    <property type="project" value="GO_Central"/>
</dbReference>
<dbReference type="GO" id="GO:0005634">
    <property type="term" value="C:nucleus"/>
    <property type="evidence" value="ECO:0000250"/>
    <property type="project" value="UniProtKB"/>
</dbReference>
<dbReference type="GO" id="GO:0032991">
    <property type="term" value="C:protein-containing complex"/>
    <property type="evidence" value="ECO:0000353"/>
    <property type="project" value="UniProtKB"/>
</dbReference>
<dbReference type="GO" id="GO:1990904">
    <property type="term" value="C:ribonucleoprotein complex"/>
    <property type="evidence" value="ECO:0000353"/>
    <property type="project" value="UniProtKB"/>
</dbReference>
<dbReference type="GO" id="GO:0000922">
    <property type="term" value="C:spindle pole"/>
    <property type="evidence" value="ECO:0007669"/>
    <property type="project" value="UniProtKB-SubCell"/>
</dbReference>
<dbReference type="GO" id="GO:0045202">
    <property type="term" value="C:synapse"/>
    <property type="evidence" value="ECO:0000318"/>
    <property type="project" value="GO_Central"/>
</dbReference>
<dbReference type="GO" id="GO:0046872">
    <property type="term" value="F:metal ion binding"/>
    <property type="evidence" value="ECO:0007669"/>
    <property type="project" value="UniProtKB-KW"/>
</dbReference>
<dbReference type="GO" id="GO:0035925">
    <property type="term" value="F:mRNA 3'-UTR AU-rich region binding"/>
    <property type="evidence" value="ECO:0000250"/>
    <property type="project" value="UniProtKB"/>
</dbReference>
<dbReference type="GO" id="GO:0003730">
    <property type="term" value="F:mRNA 3'-UTR binding"/>
    <property type="evidence" value="ECO:0000318"/>
    <property type="project" value="GO_Central"/>
</dbReference>
<dbReference type="GO" id="GO:0000900">
    <property type="term" value="F:mRNA regulatory element binding translation repressor activity"/>
    <property type="evidence" value="ECO:0000250"/>
    <property type="project" value="UniProtKB"/>
</dbReference>
<dbReference type="GO" id="GO:0043022">
    <property type="term" value="F:ribosome binding"/>
    <property type="evidence" value="ECO:0000318"/>
    <property type="project" value="GO_Central"/>
</dbReference>
<dbReference type="GO" id="GO:0008135">
    <property type="term" value="F:translation factor activity, RNA binding"/>
    <property type="evidence" value="ECO:0000318"/>
    <property type="project" value="GO_Central"/>
</dbReference>
<dbReference type="GO" id="GO:0071230">
    <property type="term" value="P:cellular response to amino acid stimulus"/>
    <property type="evidence" value="ECO:0000250"/>
    <property type="project" value="UniProtKB"/>
</dbReference>
<dbReference type="GO" id="GO:0071456">
    <property type="term" value="P:cellular response to hypoxia"/>
    <property type="evidence" value="ECO:0000250"/>
    <property type="project" value="UniProtKB"/>
</dbReference>
<dbReference type="GO" id="GO:0032869">
    <property type="term" value="P:cellular response to insulin stimulus"/>
    <property type="evidence" value="ECO:0000250"/>
    <property type="project" value="UniProtKB"/>
</dbReference>
<dbReference type="GO" id="GO:0030901">
    <property type="term" value="P:midbrain development"/>
    <property type="evidence" value="ECO:0000314"/>
    <property type="project" value="Xenbase"/>
</dbReference>
<dbReference type="GO" id="GO:0006397">
    <property type="term" value="P:mRNA processing"/>
    <property type="evidence" value="ECO:0007669"/>
    <property type="project" value="UniProtKB-KW"/>
</dbReference>
<dbReference type="GO" id="GO:2000766">
    <property type="term" value="P:negative regulation of cytoplasmic translation"/>
    <property type="evidence" value="ECO:0000250"/>
    <property type="project" value="UniProtKB"/>
</dbReference>
<dbReference type="GO" id="GO:0061351">
    <property type="term" value="P:neural precursor cell proliferation"/>
    <property type="evidence" value="ECO:0000315"/>
    <property type="project" value="Xenbase"/>
</dbReference>
<dbReference type="CDD" id="cd19757">
    <property type="entry name" value="Bbox1"/>
    <property type="match status" value="1"/>
</dbReference>
<dbReference type="CDD" id="cd12723">
    <property type="entry name" value="RRM1_CPEB1"/>
    <property type="match status" value="1"/>
</dbReference>
<dbReference type="CDD" id="cd12725">
    <property type="entry name" value="RRM2_CPEB1"/>
    <property type="match status" value="1"/>
</dbReference>
<dbReference type="FunFam" id="3.30.70.330:FF:000054">
    <property type="entry name" value="Cytoplasmic polyadenylation element-binding protein 1"/>
    <property type="match status" value="1"/>
</dbReference>
<dbReference type="FunFam" id="3.30.70.330:FF:000086">
    <property type="entry name" value="Putative Cytoplasmic polyadenylation element-binding protein 1"/>
    <property type="match status" value="1"/>
</dbReference>
<dbReference type="FunFam" id="4.10.640.40:FF:000002">
    <property type="entry name" value="Putative Cytoplasmic polyadenylation element-binding protein 1"/>
    <property type="match status" value="1"/>
</dbReference>
<dbReference type="Gene3D" id="3.30.70.330">
    <property type="match status" value="2"/>
</dbReference>
<dbReference type="Gene3D" id="4.10.640.40">
    <property type="entry name" value="Cytoplasmic polyadenylation element-binding protein, ZZ domain"/>
    <property type="match status" value="1"/>
</dbReference>
<dbReference type="InterPro" id="IPR032292">
    <property type="entry name" value="CEBP1_N"/>
</dbReference>
<dbReference type="InterPro" id="IPR032296">
    <property type="entry name" value="CEBP_ZZ"/>
</dbReference>
<dbReference type="InterPro" id="IPR038446">
    <property type="entry name" value="CEBP_ZZ_sf"/>
</dbReference>
<dbReference type="InterPro" id="IPR034819">
    <property type="entry name" value="CPEB"/>
</dbReference>
<dbReference type="InterPro" id="IPR034977">
    <property type="entry name" value="CPEB1_RRM1"/>
</dbReference>
<dbReference type="InterPro" id="IPR012677">
    <property type="entry name" value="Nucleotide-bd_a/b_plait_sf"/>
</dbReference>
<dbReference type="InterPro" id="IPR035979">
    <property type="entry name" value="RBD_domain_sf"/>
</dbReference>
<dbReference type="InterPro" id="IPR000504">
    <property type="entry name" value="RRM_dom"/>
</dbReference>
<dbReference type="PANTHER" id="PTHR12566">
    <property type="entry name" value="CYTOPLASMIC POLYADENYLATION ELEMENT BINDING PROTEIN CPEB"/>
    <property type="match status" value="1"/>
</dbReference>
<dbReference type="PANTHER" id="PTHR12566:SF9">
    <property type="entry name" value="CYTOPLASMIC POLYADENYLATION ELEMENT-BINDING PROTEIN 1"/>
    <property type="match status" value="1"/>
</dbReference>
<dbReference type="Pfam" id="PF16368">
    <property type="entry name" value="CEBP1_N"/>
    <property type="match status" value="1"/>
</dbReference>
<dbReference type="Pfam" id="PF16366">
    <property type="entry name" value="CEBP_ZZ"/>
    <property type="match status" value="1"/>
</dbReference>
<dbReference type="Pfam" id="PF16367">
    <property type="entry name" value="RRM_7"/>
    <property type="match status" value="1"/>
</dbReference>
<dbReference type="SMART" id="SM00360">
    <property type="entry name" value="RRM"/>
    <property type="match status" value="2"/>
</dbReference>
<dbReference type="SUPFAM" id="SSF54928">
    <property type="entry name" value="RNA-binding domain, RBD"/>
    <property type="match status" value="1"/>
</dbReference>
<dbReference type="PROSITE" id="PS50102">
    <property type="entry name" value="RRM"/>
    <property type="match status" value="2"/>
</dbReference>
<organism>
    <name type="scientific">Xenopus laevis</name>
    <name type="common">African clawed frog</name>
    <dbReference type="NCBI Taxonomy" id="8355"/>
    <lineage>
        <taxon>Eukaryota</taxon>
        <taxon>Metazoa</taxon>
        <taxon>Chordata</taxon>
        <taxon>Craniata</taxon>
        <taxon>Vertebrata</taxon>
        <taxon>Euteleostomi</taxon>
        <taxon>Amphibia</taxon>
        <taxon>Batrachia</taxon>
        <taxon>Anura</taxon>
        <taxon>Pipoidea</taxon>
        <taxon>Pipidae</taxon>
        <taxon>Xenopodinae</taxon>
        <taxon>Xenopus</taxon>
        <taxon>Xenopus</taxon>
    </lineage>
</organism>
<protein>
    <recommendedName>
        <fullName>Cytoplasmic polyadenylation element-binding protein 1-A</fullName>
        <shortName>CPE-BP1-A</shortName>
        <shortName>CPE-binding protein 1-A</shortName>
        <shortName>CPEB-1-A</shortName>
    </recommendedName>
    <alternativeName>
        <fullName>58 kDa CPE-binding protein</fullName>
    </alternativeName>
</protein>
<reference key="1">
    <citation type="journal article" date="1994" name="Cell">
        <title>CPEB is a specificity factor that mediates cytoplasmic polyadenylation during Xenopus oocyte maturation.</title>
        <authorList>
            <person name="Hake L.E."/>
            <person name="Richter J.D."/>
        </authorList>
    </citation>
    <scope>NUCLEOTIDE SEQUENCE [MRNA]</scope>
    <scope>FUNCTION</scope>
    <scope>PHOSPHORYLATION</scope>
    <scope>RNA-BINDING</scope>
    <scope>TISSUE SPECIFICITY</scope>
</reference>
<reference key="2">
    <citation type="submission" date="2008-11" db="EMBL/GenBank/DDBJ databases">
        <authorList>
            <consortium name="NIH - Xenopus Gene Collection (XGC) project"/>
        </authorList>
    </citation>
    <scope>NUCLEOTIDE SEQUENCE [LARGE SCALE MRNA]</scope>
</reference>
<reference key="3">
    <citation type="journal article" date="1991" name="Genes Dev.">
        <title>Maturation-specific polyadenylation: in vitro activation by p34cdc2 and phosphorylation of a 58-kD CPE-binding protein.</title>
        <authorList>
            <person name="Paris J."/>
            <person name="Swenson K."/>
            <person name="Piwnica-Worms H."/>
            <person name="Richter J.D."/>
        </authorList>
    </citation>
    <scope>PHOSPHORYLATION</scope>
</reference>
<reference key="4">
    <citation type="journal article" date="1998" name="Mol. Cell. Biol.">
        <title>Specificity of RNA binding by CPEB: requirement for RNA recognition motifs and a novel zinc finger.</title>
        <authorList>
            <person name="Hake L.E."/>
            <person name="Mendez R."/>
            <person name="Richter J.D."/>
        </authorList>
    </citation>
    <scope>PHOSPHORYLATION</scope>
    <scope>MUTAGENESIS OF CYS-529; CYS-539 AND HIS-547</scope>
    <scope>RNA-BINDING</scope>
</reference>
<reference key="5">
    <citation type="journal article" date="1999" name="Mol. Cell">
        <title>Maskin is a CPEB-associated factor that transiently interacts with eIF-4E.</title>
        <authorList>
            <person name="Stebbins-Boaz B."/>
            <person name="Cao Q."/>
            <person name="de Moor C.H."/>
            <person name="Mendez R."/>
            <person name="Richter J.D."/>
        </authorList>
    </citation>
    <scope>IDENTIFICATION IN A COMPLEX WITH TACC3 AND EIF4E</scope>
    <scope>INTERACTION WITH TACC3</scope>
</reference>
<reference key="6">
    <citation type="journal article" date="2000" name="Cell">
        <title>CPEB, maskin, and cyclin B1 mRNA at the mitotic apparatus: implications for local translational control of cell division.</title>
        <authorList>
            <person name="Groisman I."/>
            <person name="Huang Y.-S."/>
            <person name="Mendez R."/>
            <person name="Cao Q."/>
            <person name="Theurkauf W."/>
            <person name="Richter J.D."/>
        </authorList>
    </citation>
    <scope>INTERACTION WITH MICROTUBULES</scope>
    <scope>SUBCELLULAR LOCATION</scope>
    <scope>DEVELOPMENTAL STAGE</scope>
</reference>
<reference key="7">
    <citation type="journal article" date="2000" name="Mol. Cell">
        <title>Phosphorylation of CPEB by Eg2 mediates the recruitment of CPSF into an active cytoplasmic polyadenylation complex.</title>
        <authorList>
            <person name="Mendez R."/>
            <person name="Murthy K.G."/>
            <person name="Ryan K."/>
            <person name="Manley J.L."/>
            <person name="Richter J.D."/>
        </authorList>
    </citation>
    <scope>FUNCTION</scope>
    <scope>INTERACTION WITH CPSF1</scope>
    <scope>PHOSPHORYLATION</scope>
</reference>
<reference key="8">
    <citation type="journal article" date="2000" name="Nature">
        <title>Phosphorylation of CPE binding factor by Eg2 regulates translation of c-mos mRNA.</title>
        <authorList>
            <person name="Mendez R."/>
            <person name="Hake L.E."/>
            <person name="Andresson T."/>
            <person name="Littlepage L.E."/>
            <person name="Ruderman J.V."/>
            <person name="Richter J.D."/>
        </authorList>
    </citation>
    <scope>PROTEIN SEQUENCE OF 172-175</scope>
    <scope>PHOSPHORYLATION AT SER-174</scope>
    <scope>MUTAGENESIS OF SER-174 AND 174-SER--SER-180</scope>
    <scope>TISSUE SPECIFICITY</scope>
</reference>
<reference key="9">
    <citation type="journal article" date="2001" name="Dev. Biol.">
        <title>CPEB degradation during Xenopus oocyte maturation requires a PEST domain and the 26S proteasome.</title>
        <authorList>
            <person name="Reverte C.G."/>
            <person name="Ahearn M.D."/>
            <person name="Hake L.E."/>
        </authorList>
    </citation>
    <scope>PROTEASOME MEDIATED DEGRADATION</scope>
    <scope>TISSUE SPECIFICITY</scope>
</reference>
<reference key="10">
    <citation type="journal article" date="2002" name="Cell">
        <title>Translational control of the embryonic cell cycle.</title>
        <authorList>
            <person name="Groisman I."/>
            <person name="Jung M.-Y."/>
            <person name="Sarkissian M."/>
            <person name="Cao Q."/>
            <person name="Richter J.D."/>
        </authorList>
    </citation>
    <scope>FUNCTION</scope>
    <scope>PHOSPHORYLATION AT SER-174</scope>
    <scope>MUTAGENESIS OF SER-174</scope>
</reference>
<reference key="11">
    <citation type="journal article" date="2002" name="EMBO J.">
        <title>Differential mRNA translation and meiotic progression require Cdc2-mediated CPEB destruction.</title>
        <authorList>
            <person name="Mendez R."/>
            <person name="Barnard D."/>
            <person name="Richter J.D."/>
        </authorList>
    </citation>
    <scope>FUNCTION</scope>
    <scope>PHOSPHORYLATION AT SER-138; SER-210 AND SER-248</scope>
    <scope>MUTAGENESIS OF SER-138; SER-210 AND SER-248</scope>
    <scope>PROTEASOME MEDIATED DEGRADATION</scope>
    <scope>UBIQUITINATION</scope>
</reference>
<reference key="12">
    <citation type="journal article" date="2003" name="Dev. Biol.">
        <title>XGef is a CPEB-interacting protein involved in Xenopus oocyte maturation.</title>
        <authorList>
            <person name="Reverte C.G."/>
            <person name="Yuan L."/>
            <person name="Keady B.T."/>
            <person name="Lacza C."/>
            <person name="Attfield K.R."/>
            <person name="Mahon G.M."/>
            <person name="Freeman B."/>
            <person name="Whitehead I.P."/>
            <person name="Hake L.E."/>
        </authorList>
    </citation>
    <scope>INTERACTION WITH XGEF</scope>
</reference>
<reference key="13">
    <citation type="journal article" date="2004" name="Cell">
        <title>Symplekin and xGLD-2 are required for CPEB-mediated cytoplasmic polyadenylation.</title>
        <authorList>
            <person name="Barnard D.C."/>
            <person name="Ryan K."/>
            <person name="Manley J.L."/>
            <person name="Richter J.D."/>
        </authorList>
    </citation>
    <scope>IDENTIFICATION IN A CYTOPLASMIC POLYADENYLATION COMPLEX WITH SYMPK; PAPD4 AND CPSF1</scope>
    <scope>INTERACTION WITH CPSF1; PAPD4 AND SYMPK</scope>
</reference>
<reference key="14">
    <citation type="journal article" date="2005" name="Mol. Biol. Cell">
        <title>XGef mediates early CPEB phosphorylation during Xenopus oocyte meiotic maturation.</title>
        <authorList>
            <person name="Martinez S.E."/>
            <person name="Yuan L."/>
            <person name="Lacza C."/>
            <person name="Ransom H."/>
            <person name="Mahon G.M."/>
            <person name="Whitehead I.P."/>
            <person name="Hake L.E."/>
        </authorList>
    </citation>
    <scope>IDENTIFICATION IN A MRNP COMPLEX WITH XGEF AND MOS MRNA</scope>
    <scope>INTERACTION WITH XGEF</scope>
    <scope>PHOSPHORYLATION</scope>
    <scope>PHOSPHORYLATION AT SER-174</scope>
</reference>
<reference key="15">
    <citation type="journal article" date="2005" name="Mol. Cell. Biol.">
        <title>Amyloid precursor proteins anchor CPEB to membranes and promote polyadenylation-induced translation.</title>
        <authorList>
            <person name="Cao Q."/>
            <person name="Huang Y.-S."/>
            <person name="Kan M.-C."/>
            <person name="Richter J.D."/>
        </authorList>
    </citation>
    <scope>INTERACTION WITH APLP1</scope>
    <scope>PHOSPHORYLATION AT SER-174</scope>
    <scope>SUBCELLULAR LOCATION</scope>
</reference>
<reference key="16">
    <citation type="journal article" date="2007" name="J. Biol. Chem.">
        <title>CPEB interacts with an ovary-specific eIF4E and 4E-T in early Xenopus oocytes.</title>
        <authorList>
            <person name="Minshall N."/>
            <person name="Reiter M.H."/>
            <person name="Weil D."/>
            <person name="Standart N."/>
        </authorList>
    </citation>
    <scope>IDENTIFICATION IN A RIBONUCLEOPROTEIN COMPLEX WITH LSM14B; DDX6; YBX2; PAT1; EIF4ENIF1 AND EIF4E1B</scope>
</reference>
<accession>Q91572</accession>
<accession>B7ZRW6</accession>
<accession>B7ZRZ4</accession>
<proteinExistence type="evidence at protein level"/>
<keyword id="KW-0010">Activator</keyword>
<keyword id="KW-0963">Cytoplasm</keyword>
<keyword id="KW-0206">Cytoskeleton</keyword>
<keyword id="KW-0903">Direct protein sequencing</keyword>
<keyword id="KW-0472">Membrane</keyword>
<keyword id="KW-0479">Metal-binding</keyword>
<keyword id="KW-0507">mRNA processing</keyword>
<keyword id="KW-0597">Phosphoprotein</keyword>
<keyword id="KW-1185">Reference proteome</keyword>
<keyword id="KW-0677">Repeat</keyword>
<keyword id="KW-0678">Repressor</keyword>
<keyword id="KW-0687">Ribonucleoprotein</keyword>
<keyword id="KW-0694">RNA-binding</keyword>
<keyword id="KW-0810">Translation regulation</keyword>
<keyword id="KW-0832">Ubl conjugation</keyword>
<keyword id="KW-0862">Zinc</keyword>
<gene>
    <name type="primary">cpeb1-a</name>
    <name type="synonym">cpeb</name>
</gene>
<feature type="chain" id="PRO_0000269257" description="Cytoplasmic polyadenylation element-binding protein 1-A">
    <location>
        <begin position="1"/>
        <end position="568"/>
    </location>
</feature>
<feature type="domain" description="RRM 1" evidence="2">
    <location>
        <begin position="313"/>
        <end position="410"/>
    </location>
</feature>
<feature type="domain" description="RRM 2" evidence="2">
    <location>
        <begin position="432"/>
        <end position="513"/>
    </location>
</feature>
<feature type="region of interest" description="Necessary for interaction with microtubules and localization at the mitotic apparatus">
    <location>
        <begin position="172"/>
        <end position="175"/>
    </location>
</feature>
<feature type="region of interest" description="Disordered" evidence="3">
    <location>
        <begin position="173"/>
        <end position="195"/>
    </location>
</feature>
<feature type="region of interest" description="Necessary for degradation by the proteasome">
    <location>
        <begin position="181"/>
        <end position="208"/>
    </location>
</feature>
<feature type="region of interest" description="Necessary for interaction with microtubules and localization at the mitotic apparatus">
    <location>
        <begin position="182"/>
        <end position="191"/>
    </location>
</feature>
<feature type="compositionally biased region" description="Low complexity" evidence="3">
    <location>
        <begin position="179"/>
        <end position="195"/>
    </location>
</feature>
<feature type="binding site" evidence="1">
    <location>
        <position position="517"/>
    </location>
    <ligand>
        <name>Zn(2+)</name>
        <dbReference type="ChEBI" id="CHEBI:29105"/>
        <label>1</label>
    </ligand>
</feature>
<feature type="binding site" evidence="1">
    <location>
        <position position="520"/>
    </location>
    <ligand>
        <name>Zn(2+)</name>
        <dbReference type="ChEBI" id="CHEBI:29105"/>
        <label>1</label>
    </ligand>
</feature>
<feature type="binding site" evidence="1">
    <location>
        <position position="529"/>
    </location>
    <ligand>
        <name>Zn(2+)</name>
        <dbReference type="ChEBI" id="CHEBI:29105"/>
        <label>2</label>
    </ligand>
</feature>
<feature type="binding site" evidence="1">
    <location>
        <position position="534"/>
    </location>
    <ligand>
        <name>Zn(2+)</name>
        <dbReference type="ChEBI" id="CHEBI:29105"/>
        <label>2</label>
    </ligand>
</feature>
<feature type="binding site" evidence="1">
    <location>
        <position position="539"/>
    </location>
    <ligand>
        <name>Zn(2+)</name>
        <dbReference type="ChEBI" id="CHEBI:29105"/>
        <label>1</label>
    </ligand>
</feature>
<feature type="binding site" evidence="1">
    <location>
        <position position="542"/>
    </location>
    <ligand>
        <name>Zn(2+)</name>
        <dbReference type="ChEBI" id="CHEBI:29105"/>
        <label>1</label>
    </ligand>
</feature>
<feature type="binding site" evidence="1">
    <location>
        <position position="547"/>
    </location>
    <ligand>
        <name>Zn(2+)</name>
        <dbReference type="ChEBI" id="CHEBI:29105"/>
        <label>2</label>
    </ligand>
</feature>
<feature type="binding site" evidence="1">
    <location>
        <position position="555"/>
    </location>
    <ligand>
        <name>Zn(2+)</name>
        <dbReference type="ChEBI" id="CHEBI:29105"/>
        <label>2</label>
    </ligand>
</feature>
<feature type="modified residue" description="Phosphoserine; by cdk1" evidence="9">
    <location>
        <position position="138"/>
    </location>
</feature>
<feature type="modified residue" description="Phosphoserine; by aurka" evidence="5 10 13 14">
    <location>
        <position position="174"/>
    </location>
</feature>
<feature type="modified residue" description="Phosphoserine; by cdk1" evidence="9">
    <location>
        <position position="210"/>
    </location>
</feature>
<feature type="modified residue" description="Phosphoserine; by cdk1" evidence="9">
    <location>
        <position position="248"/>
    </location>
</feature>
<feature type="mutagenesis site" description="Abolishes degradation by the proteasome; when associated with A-210 and A-248." evidence="9">
    <original>S</original>
    <variation>A</variation>
    <location>
        <position position="138"/>
    </location>
</feature>
<feature type="mutagenesis site" description="Abolishes phosphorylation and CPE-containing mRNA cytoplasmic polyadenylation and oocyte maturation." evidence="5">
    <original>SRSILDS</original>
    <variation>ARSILDA</variation>
    <location>
        <begin position="174"/>
        <end position="180"/>
    </location>
</feature>
<feature type="mutagenesis site" description="Does not abolish interaction with cpsf2 and CPE-containing mRNA cytoplasmic polyadenylation and oocyte maturation." evidence="5">
    <original>SRSILDS</original>
    <variation>DRSILD</variation>
    <location>
        <begin position="174"/>
        <end position="180"/>
    </location>
</feature>
<feature type="mutagenesis site" description="Abolishes phosphorylation and CPE-containing mRNA cytoplasmic polyadenylation and oocyte maturation. Diminishes the interaction with cpsf2 and papd4/gld2." evidence="5 10">
    <original>S</original>
    <variation>A</variation>
    <location>
        <position position="174"/>
    </location>
</feature>
<feature type="mutagenesis site" description="Stimulates premature CPE-dependent polyadenylation and translation in primary oocytes. Does not diminishes the interaction with cpsf and papd4/gld2." evidence="5 10">
    <original>S</original>
    <variation>D</variation>
    <location>
        <position position="174"/>
    </location>
</feature>
<feature type="mutagenesis site" description="Abolishes degradation by the proteasome; when associated with A-138 and A-248." evidence="9">
    <original>S</original>
    <variation>A</variation>
    <location>
        <position position="210"/>
    </location>
</feature>
<feature type="mutagenesis site" description="Abolishes degradation by the proteasome; when associated with A-138 and A-210." evidence="9">
    <original>S</original>
    <variation>A</variation>
    <location>
        <position position="248"/>
    </location>
</feature>
<feature type="mutagenesis site" description="Abolishes RNA-binding." evidence="17">
    <original>C</original>
    <variation>A</variation>
    <location>
        <position position="529"/>
    </location>
</feature>
<feature type="mutagenesis site" description="Abolishes RNA-binding." evidence="17">
    <original>C</original>
    <variation>A</variation>
    <location>
        <position position="539"/>
    </location>
</feature>
<feature type="mutagenesis site" description="Abolishes RNA-binding." evidence="17">
    <original>H</original>
    <variation>A</variation>
    <location>
        <position position="547"/>
    </location>
</feature>
<feature type="sequence conflict" description="In Ref. 2; AAI70313." evidence="18" ref="2">
    <original>P</original>
    <variation>S</variation>
    <location>
        <position position="19"/>
    </location>
</feature>
<feature type="sequence conflict" description="In Ref. 1; AAA80483." evidence="18" ref="1">
    <original>P</original>
    <variation>H</variation>
    <location>
        <position position="214"/>
    </location>
</feature>
<feature type="sequence conflict" description="In Ref. 1; AAA80483." evidence="18" ref="1">
    <original>R</original>
    <variation>A</variation>
    <location>
        <position position="404"/>
    </location>
</feature>
<evidence type="ECO:0000250" key="1"/>
<evidence type="ECO:0000255" key="2">
    <source>
        <dbReference type="PROSITE-ProRule" id="PRU00176"/>
    </source>
</evidence>
<evidence type="ECO:0000256" key="3">
    <source>
        <dbReference type="SAM" id="MobiDB-lite"/>
    </source>
</evidence>
<evidence type="ECO:0000269" key="4">
    <source>
    </source>
</evidence>
<evidence type="ECO:0000269" key="5">
    <source>
    </source>
</evidence>
<evidence type="ECO:0000269" key="6">
    <source>
    </source>
</evidence>
<evidence type="ECO:0000269" key="7">
    <source>
    </source>
</evidence>
<evidence type="ECO:0000269" key="8">
    <source>
    </source>
</evidence>
<evidence type="ECO:0000269" key="9">
    <source>
    </source>
</evidence>
<evidence type="ECO:0000269" key="10">
    <source>
    </source>
</evidence>
<evidence type="ECO:0000269" key="11">
    <source>
    </source>
</evidence>
<evidence type="ECO:0000269" key="12">
    <source>
    </source>
</evidence>
<evidence type="ECO:0000269" key="13">
    <source>
    </source>
</evidence>
<evidence type="ECO:0000269" key="14">
    <source>
    </source>
</evidence>
<evidence type="ECO:0000269" key="15">
    <source>
    </source>
</evidence>
<evidence type="ECO:0000269" key="16">
    <source>
    </source>
</evidence>
<evidence type="ECO:0000269" key="17">
    <source>
    </source>
</evidence>
<evidence type="ECO:0000305" key="18"/>
<name>CPE1A_XENLA</name>
<sequence>MAFPLKDDLGRAKDCWGCPSDTPALSTCSNADIFRRINAMLDNSLDFTGVCTTPNTKGKCEHLQDYQDTEGPAASRMLFSTSHEPLPRGLPDTNDLCLGLQSLSLTGWDRPWSTQDSEAGGHSSTPTAAQSVFSMLNSPMGKPSPLGFLTFDPIGSDLMEKYPTPLLRSSRLDSRSILDSRSSSPSDSDTSGFSSGSDHLSDLISSLRISPPLPFLPLGGGVSRDPLKLGIGSRLDQDHAALAAATVSPLGITKGWPSTSVWPSWDLLDSAEDPFSIEREARLHRQAAAVNEATCTWSGQLPPRNYKNPVYSCKVFLGGVPWDITETGLINTFRVFGALSVEWPGKDGKHPRCPPKGNMPKGYVYLVFESEKSVRALLQACSQDLLSQDGLSEHYFKMSSRRMRCKEVQVIPWVLADSNFVRSPSQRLDPSKTVFVGALHGMLNAEALASIMNDLFGGVVYAGIDTDKHKYPIGSGRVTFNNQRSYLKAVSAAFVEIKTAKFTKKVQIDPYLEDSVCQVCNAQPGPFFCRDQVCFKYFCRSCWHWQHSMEILRHHRPLMRNQKSRDSS</sequence>